<evidence type="ECO:0000255" key="1">
    <source>
        <dbReference type="HAMAP-Rule" id="MF_00017"/>
    </source>
</evidence>
<sequence length="201" mass="21748">MQTSPLLESLMEALRCLPGVGPKSAQRMAFHLLQRDRSGGMRLAQALTRAMSEIGHCRDCRTFTEQEVCTICTNARRRENGQICVVESPADIHAIEQTGQYSGRYFVLMGHLSPLDGIGPQDIGLDRLEVRLSQEAVSEVILATNPTVEGEATANYIAEMCAAHGVLASRIAHGVPVGGELEMVDGTTLSHSLAGRHPVTR</sequence>
<keyword id="KW-0227">DNA damage</keyword>
<keyword id="KW-0233">DNA recombination</keyword>
<keyword id="KW-0234">DNA repair</keyword>
<keyword id="KW-0479">Metal-binding</keyword>
<keyword id="KW-0862">Zinc</keyword>
<keyword id="KW-0863">Zinc-finger</keyword>
<proteinExistence type="inferred from homology"/>
<gene>
    <name evidence="1" type="primary">recR</name>
    <name type="ordered locus">NT01EI_1110</name>
</gene>
<reference key="1">
    <citation type="submission" date="2009-03" db="EMBL/GenBank/DDBJ databases">
        <title>Complete genome sequence of Edwardsiella ictaluri 93-146.</title>
        <authorList>
            <person name="Williams M.L."/>
            <person name="Gillaspy A.F."/>
            <person name="Dyer D.W."/>
            <person name="Thune R.L."/>
            <person name="Waldbieser G.C."/>
            <person name="Schuster S.C."/>
            <person name="Gipson J."/>
            <person name="Zaitshik J."/>
            <person name="Landry C."/>
            <person name="Lawrence M.L."/>
        </authorList>
    </citation>
    <scope>NUCLEOTIDE SEQUENCE [LARGE SCALE GENOMIC DNA]</scope>
    <source>
        <strain>93-146</strain>
    </source>
</reference>
<dbReference type="EMBL" id="CP001600">
    <property type="protein sequence ID" value="ACR68321.1"/>
    <property type="molecule type" value="Genomic_DNA"/>
</dbReference>
<dbReference type="RefSeq" id="WP_015870500.1">
    <property type="nucleotide sequence ID" value="NZ_CP169062.1"/>
</dbReference>
<dbReference type="SMR" id="C5BD00"/>
<dbReference type="STRING" id="67780.B6E78_15915"/>
<dbReference type="GeneID" id="69538143"/>
<dbReference type="KEGG" id="eic:NT01EI_1110"/>
<dbReference type="PATRIC" id="fig|634503.3.peg.1008"/>
<dbReference type="HOGENOM" id="CLU_060739_1_2_6"/>
<dbReference type="OrthoDB" id="9802672at2"/>
<dbReference type="Proteomes" id="UP000001485">
    <property type="component" value="Chromosome"/>
</dbReference>
<dbReference type="GO" id="GO:0003677">
    <property type="term" value="F:DNA binding"/>
    <property type="evidence" value="ECO:0007669"/>
    <property type="project" value="UniProtKB-UniRule"/>
</dbReference>
<dbReference type="GO" id="GO:0008270">
    <property type="term" value="F:zinc ion binding"/>
    <property type="evidence" value="ECO:0007669"/>
    <property type="project" value="UniProtKB-KW"/>
</dbReference>
<dbReference type="GO" id="GO:0006310">
    <property type="term" value="P:DNA recombination"/>
    <property type="evidence" value="ECO:0007669"/>
    <property type="project" value="UniProtKB-UniRule"/>
</dbReference>
<dbReference type="GO" id="GO:0006281">
    <property type="term" value="P:DNA repair"/>
    <property type="evidence" value="ECO:0007669"/>
    <property type="project" value="UniProtKB-UniRule"/>
</dbReference>
<dbReference type="CDD" id="cd01025">
    <property type="entry name" value="TOPRIM_recR"/>
    <property type="match status" value="1"/>
</dbReference>
<dbReference type="FunFam" id="1.10.8.420:FF:000001">
    <property type="entry name" value="Recombination protein RecR"/>
    <property type="match status" value="1"/>
</dbReference>
<dbReference type="FunFam" id="3.40.1360.10:FF:000001">
    <property type="entry name" value="Recombination protein RecR"/>
    <property type="match status" value="1"/>
</dbReference>
<dbReference type="Gene3D" id="3.40.1360.10">
    <property type="match status" value="1"/>
</dbReference>
<dbReference type="Gene3D" id="6.10.250.240">
    <property type="match status" value="1"/>
</dbReference>
<dbReference type="Gene3D" id="1.10.8.420">
    <property type="entry name" value="RecR Domain 1"/>
    <property type="match status" value="1"/>
</dbReference>
<dbReference type="HAMAP" id="MF_00017">
    <property type="entry name" value="RecR"/>
    <property type="match status" value="1"/>
</dbReference>
<dbReference type="InterPro" id="IPR000093">
    <property type="entry name" value="DNA_Rcmb_RecR"/>
</dbReference>
<dbReference type="InterPro" id="IPR023627">
    <property type="entry name" value="Rcmb_RecR"/>
</dbReference>
<dbReference type="InterPro" id="IPR015967">
    <property type="entry name" value="Rcmb_RecR_Znf"/>
</dbReference>
<dbReference type="InterPro" id="IPR006171">
    <property type="entry name" value="TOPRIM_dom"/>
</dbReference>
<dbReference type="InterPro" id="IPR034137">
    <property type="entry name" value="TOPRIM_RecR"/>
</dbReference>
<dbReference type="NCBIfam" id="TIGR00615">
    <property type="entry name" value="recR"/>
    <property type="match status" value="1"/>
</dbReference>
<dbReference type="PANTHER" id="PTHR30446">
    <property type="entry name" value="RECOMBINATION PROTEIN RECR"/>
    <property type="match status" value="1"/>
</dbReference>
<dbReference type="PANTHER" id="PTHR30446:SF0">
    <property type="entry name" value="RECOMBINATION PROTEIN RECR"/>
    <property type="match status" value="1"/>
</dbReference>
<dbReference type="Pfam" id="PF21175">
    <property type="entry name" value="RecR_C"/>
    <property type="match status" value="1"/>
</dbReference>
<dbReference type="Pfam" id="PF21176">
    <property type="entry name" value="RecR_HhH"/>
    <property type="match status" value="1"/>
</dbReference>
<dbReference type="Pfam" id="PF02132">
    <property type="entry name" value="RecR_ZnF"/>
    <property type="match status" value="1"/>
</dbReference>
<dbReference type="Pfam" id="PF13662">
    <property type="entry name" value="Toprim_4"/>
    <property type="match status" value="1"/>
</dbReference>
<dbReference type="SMART" id="SM00493">
    <property type="entry name" value="TOPRIM"/>
    <property type="match status" value="1"/>
</dbReference>
<dbReference type="SUPFAM" id="SSF111304">
    <property type="entry name" value="Recombination protein RecR"/>
    <property type="match status" value="1"/>
</dbReference>
<dbReference type="PROSITE" id="PS50880">
    <property type="entry name" value="TOPRIM"/>
    <property type="match status" value="1"/>
</dbReference>
<name>RECR_EDWI9</name>
<feature type="chain" id="PRO_1000201860" description="Recombination protein RecR">
    <location>
        <begin position="1"/>
        <end position="201"/>
    </location>
</feature>
<feature type="domain" description="Toprim" evidence="1">
    <location>
        <begin position="81"/>
        <end position="176"/>
    </location>
</feature>
<feature type="zinc finger region" description="C4-type" evidence="1">
    <location>
        <begin position="57"/>
        <end position="72"/>
    </location>
</feature>
<comment type="function">
    <text evidence="1">May play a role in DNA repair. It seems to be involved in an RecBC-independent recombinational process of DNA repair. It may act with RecF and RecO.</text>
</comment>
<comment type="similarity">
    <text evidence="1">Belongs to the RecR family.</text>
</comment>
<accession>C5BD00</accession>
<protein>
    <recommendedName>
        <fullName evidence="1">Recombination protein RecR</fullName>
    </recommendedName>
</protein>
<organism>
    <name type="scientific">Edwardsiella ictaluri (strain 93-146)</name>
    <dbReference type="NCBI Taxonomy" id="634503"/>
    <lineage>
        <taxon>Bacteria</taxon>
        <taxon>Pseudomonadati</taxon>
        <taxon>Pseudomonadota</taxon>
        <taxon>Gammaproteobacteria</taxon>
        <taxon>Enterobacterales</taxon>
        <taxon>Hafniaceae</taxon>
        <taxon>Edwardsiella</taxon>
    </lineage>
</organism>